<feature type="chain" id="PRO_0000138277" description="CTP synthase">
    <location>
        <begin position="1"/>
        <end position="535"/>
    </location>
</feature>
<feature type="domain" description="Glutamine amidotransferase type-1" evidence="1">
    <location>
        <begin position="300"/>
        <end position="535"/>
    </location>
</feature>
<feature type="active site" description="For GATase activity" evidence="1">
    <location>
        <position position="385"/>
    </location>
</feature>
<feature type="active site" description="For GATase activity" evidence="1">
    <location>
        <position position="509"/>
    </location>
</feature>
<feature type="active site" description="For GATase activity" evidence="1">
    <location>
        <position position="511"/>
    </location>
</feature>
<keyword id="KW-0067">ATP-binding</keyword>
<keyword id="KW-0315">Glutamine amidotransferase</keyword>
<keyword id="KW-0436">Ligase</keyword>
<keyword id="KW-0547">Nucleotide-binding</keyword>
<keyword id="KW-0665">Pyrimidine biosynthesis</keyword>
<keyword id="KW-1185">Reference proteome</keyword>
<gene>
    <name type="ordered locus">ECU11_0480</name>
</gene>
<gene>
    <name type="ordered locus">ECU11_0880</name>
</gene>
<proteinExistence type="inferred from homology"/>
<name>PYRG_ENCCU</name>
<dbReference type="EC" id="6.3.4.2"/>
<dbReference type="EMBL" id="AL590450">
    <property type="protein sequence ID" value="CAD25958.1"/>
    <property type="molecule type" value="Genomic_DNA"/>
</dbReference>
<dbReference type="EMBL" id="AL590450">
    <property type="protein sequence ID" value="CAD25998.1"/>
    <property type="molecule type" value="Genomic_DNA"/>
</dbReference>
<dbReference type="RefSeq" id="NP_586354.1">
    <property type="nucleotide sequence ID" value="NM_001042187.1"/>
</dbReference>
<dbReference type="RefSeq" id="NP_586394.1">
    <property type="nucleotide sequence ID" value="NM_001042227.1"/>
</dbReference>
<dbReference type="SMR" id="Q8SQI7"/>
<dbReference type="FunCoup" id="Q8SQI7">
    <property type="interactions" value="99"/>
</dbReference>
<dbReference type="STRING" id="284813.Q8SQI7"/>
<dbReference type="GeneID" id="860007"/>
<dbReference type="GeneID" id="860047"/>
<dbReference type="KEGG" id="ecu:ECU11_0480"/>
<dbReference type="KEGG" id="ecu:ECU11_0880"/>
<dbReference type="VEuPathDB" id="MicrosporidiaDB:ECU11_0480"/>
<dbReference type="VEuPathDB" id="MicrosporidiaDB:ECU11_0880"/>
<dbReference type="HOGENOM" id="CLU_011675_5_0_1"/>
<dbReference type="InParanoid" id="Q8SQI7"/>
<dbReference type="OMA" id="EFNNAYR"/>
<dbReference type="OrthoDB" id="1739076at2759"/>
<dbReference type="UniPathway" id="UPA00159">
    <property type="reaction ID" value="UER00277"/>
</dbReference>
<dbReference type="Proteomes" id="UP000000819">
    <property type="component" value="Chromosome XI"/>
</dbReference>
<dbReference type="GO" id="GO:0005524">
    <property type="term" value="F:ATP binding"/>
    <property type="evidence" value="ECO:0007669"/>
    <property type="project" value="UniProtKB-KW"/>
</dbReference>
<dbReference type="GO" id="GO:0003883">
    <property type="term" value="F:CTP synthase activity"/>
    <property type="evidence" value="ECO:0007669"/>
    <property type="project" value="UniProtKB-EC"/>
</dbReference>
<dbReference type="GO" id="GO:0042802">
    <property type="term" value="F:identical protein binding"/>
    <property type="evidence" value="ECO:0007669"/>
    <property type="project" value="TreeGrafter"/>
</dbReference>
<dbReference type="GO" id="GO:0044210">
    <property type="term" value="P:'de novo' CTP biosynthetic process"/>
    <property type="evidence" value="ECO:0007669"/>
    <property type="project" value="UniProtKB-UniPathway"/>
</dbReference>
<dbReference type="GO" id="GO:0019856">
    <property type="term" value="P:pyrimidine nucleobase biosynthetic process"/>
    <property type="evidence" value="ECO:0007669"/>
    <property type="project" value="TreeGrafter"/>
</dbReference>
<dbReference type="CDD" id="cd03113">
    <property type="entry name" value="CTPS_N"/>
    <property type="match status" value="1"/>
</dbReference>
<dbReference type="CDD" id="cd01746">
    <property type="entry name" value="GATase1_CTP_Synthase"/>
    <property type="match status" value="1"/>
</dbReference>
<dbReference type="Gene3D" id="3.40.50.880">
    <property type="match status" value="1"/>
</dbReference>
<dbReference type="Gene3D" id="3.40.50.300">
    <property type="entry name" value="P-loop containing nucleotide triphosphate hydrolases"/>
    <property type="match status" value="1"/>
</dbReference>
<dbReference type="InterPro" id="IPR029062">
    <property type="entry name" value="Class_I_gatase-like"/>
</dbReference>
<dbReference type="InterPro" id="IPR004468">
    <property type="entry name" value="CTP_synthase"/>
</dbReference>
<dbReference type="InterPro" id="IPR017456">
    <property type="entry name" value="CTP_synthase_N"/>
</dbReference>
<dbReference type="InterPro" id="IPR017926">
    <property type="entry name" value="GATASE"/>
</dbReference>
<dbReference type="InterPro" id="IPR033828">
    <property type="entry name" value="GATase1_CTP_Synthase"/>
</dbReference>
<dbReference type="InterPro" id="IPR027417">
    <property type="entry name" value="P-loop_NTPase"/>
</dbReference>
<dbReference type="NCBIfam" id="NF003792">
    <property type="entry name" value="PRK05380.1"/>
    <property type="match status" value="1"/>
</dbReference>
<dbReference type="NCBIfam" id="TIGR00337">
    <property type="entry name" value="PyrG"/>
    <property type="match status" value="1"/>
</dbReference>
<dbReference type="PANTHER" id="PTHR11550">
    <property type="entry name" value="CTP SYNTHASE"/>
    <property type="match status" value="1"/>
</dbReference>
<dbReference type="PANTHER" id="PTHR11550:SF0">
    <property type="entry name" value="CTP SYNTHASE-RELATED"/>
    <property type="match status" value="1"/>
</dbReference>
<dbReference type="Pfam" id="PF06418">
    <property type="entry name" value="CTP_synth_N"/>
    <property type="match status" value="1"/>
</dbReference>
<dbReference type="Pfam" id="PF00117">
    <property type="entry name" value="GATase"/>
    <property type="match status" value="1"/>
</dbReference>
<dbReference type="SUPFAM" id="SSF52317">
    <property type="entry name" value="Class I glutamine amidotransferase-like"/>
    <property type="match status" value="1"/>
</dbReference>
<dbReference type="SUPFAM" id="SSF52540">
    <property type="entry name" value="P-loop containing nucleoside triphosphate hydrolases"/>
    <property type="match status" value="1"/>
</dbReference>
<dbReference type="PROSITE" id="PS51273">
    <property type="entry name" value="GATASE_TYPE_1"/>
    <property type="match status" value="1"/>
</dbReference>
<organism>
    <name type="scientific">Encephalitozoon cuniculi (strain GB-M1)</name>
    <name type="common">Microsporidian parasite</name>
    <dbReference type="NCBI Taxonomy" id="284813"/>
    <lineage>
        <taxon>Eukaryota</taxon>
        <taxon>Fungi</taxon>
        <taxon>Fungi incertae sedis</taxon>
        <taxon>Microsporidia</taxon>
        <taxon>Unikaryonidae</taxon>
        <taxon>Encephalitozoon</taxon>
    </lineage>
</organism>
<sequence length="535" mass="59338">MKYVIVSGGVISGVGKGIVSSSIGALLKSRGHVVTHFKIDPYLNYNAGRMHPYEHGEVYVLDDGHECDMDFGNYERFNGIKLSGANSIPGGRLLHDIVKCEREGSFLGKTLQINPHIIDEVIRRIRAVADTPVESFGGGQAAVPDVVVVELGGTVGEYESSIYTEALAKFQYVVGKANCAFVSVDYIVELETGEQKTKGIQMGCRNFRRFGLNYDIVICRGRREPNMETRRKISTSCWVKEENVLGLPNLESVYLAPMFLEKHGIVEALNRILGLDDKGMDRRMLDIFSMVGRRHRDGVRIGIVGKYAPEFDSYTSLVNALKFSGAHIGVNVEIVWINSESYSVCDFERCDGVVIPGGFGARGISGKIEAIRHARENGVPLLGICLGYQLSVIEMCRNILGMSDAFSEEFQPSGKNLVVRFISDENGVVDKRLRVGGYGVELRDGLVKKLYGGVETVRERHRHRFEVAQEKVRGLLQHGVRFVGFSSGGKKINVFEVESHPFFVGVQFHPEFNARPDRPHPLITGLVSASYERSK</sequence>
<protein>
    <recommendedName>
        <fullName>CTP synthase</fullName>
        <ecNumber>6.3.4.2</ecNumber>
    </recommendedName>
    <alternativeName>
        <fullName>CTP synthetase</fullName>
    </alternativeName>
    <alternativeName>
        <fullName>UTP--ammonia ligase</fullName>
    </alternativeName>
</protein>
<comment type="function">
    <text>Catalyzes the ATP-dependent amination of UTP to CTP with either L-glutamine or ammonia as the source of nitrogen.</text>
</comment>
<comment type="catalytic activity">
    <reaction>
        <text>UTP + L-glutamine + ATP + H2O = CTP + L-glutamate + ADP + phosphate + 2 H(+)</text>
        <dbReference type="Rhea" id="RHEA:26426"/>
        <dbReference type="ChEBI" id="CHEBI:15377"/>
        <dbReference type="ChEBI" id="CHEBI:15378"/>
        <dbReference type="ChEBI" id="CHEBI:29985"/>
        <dbReference type="ChEBI" id="CHEBI:30616"/>
        <dbReference type="ChEBI" id="CHEBI:37563"/>
        <dbReference type="ChEBI" id="CHEBI:43474"/>
        <dbReference type="ChEBI" id="CHEBI:46398"/>
        <dbReference type="ChEBI" id="CHEBI:58359"/>
        <dbReference type="ChEBI" id="CHEBI:456216"/>
        <dbReference type="EC" id="6.3.4.2"/>
    </reaction>
</comment>
<comment type="pathway">
    <text>Pyrimidine metabolism; CTP biosynthesis via de novo pathway; CTP from UDP: step 2/2.</text>
</comment>
<comment type="similarity">
    <text evidence="2">Belongs to the CTP synthase family.</text>
</comment>
<reference key="1">
    <citation type="journal article" date="2001" name="Nature">
        <title>Genome sequence and gene compaction of the eukaryote parasite Encephalitozoon cuniculi.</title>
        <authorList>
            <person name="Katinka M.D."/>
            <person name="Duprat S."/>
            <person name="Cornillot E."/>
            <person name="Metenier G."/>
            <person name="Thomarat F."/>
            <person name="Prensier G."/>
            <person name="Barbe V."/>
            <person name="Peyretaillade E."/>
            <person name="Brottier P."/>
            <person name="Wincker P."/>
            <person name="Delbac F."/>
            <person name="El Alaoui H."/>
            <person name="Peyret P."/>
            <person name="Saurin W."/>
            <person name="Gouy M."/>
            <person name="Weissenbach J."/>
            <person name="Vivares C.P."/>
        </authorList>
    </citation>
    <scope>NUCLEOTIDE SEQUENCE [LARGE SCALE GENOMIC DNA]</scope>
    <source>
        <strain>GB-M1</strain>
    </source>
</reference>
<evidence type="ECO:0000255" key="1">
    <source>
        <dbReference type="PROSITE-ProRule" id="PRU00605"/>
    </source>
</evidence>
<evidence type="ECO:0000305" key="2"/>
<accession>Q8SQI7</accession>